<gene>
    <name type="primary">ampR</name>
</gene>
<evidence type="ECO:0000255" key="1">
    <source>
        <dbReference type="PROSITE-ProRule" id="PRU00253"/>
    </source>
</evidence>
<evidence type="ECO:0000269" key="2">
    <source>
    </source>
</evidence>
<evidence type="ECO:0000305" key="3"/>
<evidence type="ECO:0007829" key="4">
    <source>
        <dbReference type="PDB" id="3KOS"/>
    </source>
</evidence>
<dbReference type="EMBL" id="M27222">
    <property type="protein sequence ID" value="AAA64510.1"/>
    <property type="molecule type" value="Genomic_DNA"/>
</dbReference>
<dbReference type="PIR" id="A32882">
    <property type="entry name" value="A32882"/>
</dbReference>
<dbReference type="PDB" id="3KOS">
    <property type="method" value="X-ray"/>
    <property type="resolution" value="1.83 A"/>
    <property type="chains" value="A=83-291"/>
</dbReference>
<dbReference type="PDB" id="3KOT">
    <property type="method" value="X-ray"/>
    <property type="resolution" value="1.90 A"/>
    <property type="chains" value="A=83-291"/>
</dbReference>
<dbReference type="PDBsum" id="3KOS"/>
<dbReference type="PDBsum" id="3KOT"/>
<dbReference type="SMR" id="P12529"/>
<dbReference type="STRING" id="1333848.CFNIH1_08420"/>
<dbReference type="EvolutionaryTrace" id="P12529"/>
<dbReference type="GO" id="GO:0005737">
    <property type="term" value="C:cytoplasm"/>
    <property type="evidence" value="ECO:0007669"/>
    <property type="project" value="UniProtKB-SubCell"/>
</dbReference>
<dbReference type="GO" id="GO:0003700">
    <property type="term" value="F:DNA-binding transcription factor activity"/>
    <property type="evidence" value="ECO:0007669"/>
    <property type="project" value="InterPro"/>
</dbReference>
<dbReference type="GO" id="GO:0043565">
    <property type="term" value="F:sequence-specific DNA binding"/>
    <property type="evidence" value="ECO:0007669"/>
    <property type="project" value="TreeGrafter"/>
</dbReference>
<dbReference type="GO" id="GO:0006351">
    <property type="term" value="P:DNA-templated transcription"/>
    <property type="evidence" value="ECO:0007669"/>
    <property type="project" value="TreeGrafter"/>
</dbReference>
<dbReference type="FunFam" id="1.10.10.10:FF:000038">
    <property type="entry name" value="Glycine cleavage system transcriptional activator"/>
    <property type="match status" value="1"/>
</dbReference>
<dbReference type="Gene3D" id="3.40.190.10">
    <property type="entry name" value="Periplasmic binding protein-like II"/>
    <property type="match status" value="2"/>
</dbReference>
<dbReference type="Gene3D" id="1.10.10.10">
    <property type="entry name" value="Winged helix-like DNA-binding domain superfamily/Winged helix DNA-binding domain"/>
    <property type="match status" value="1"/>
</dbReference>
<dbReference type="InterPro" id="IPR005119">
    <property type="entry name" value="LysR_subst-bd"/>
</dbReference>
<dbReference type="InterPro" id="IPR000847">
    <property type="entry name" value="Tscrpt_reg_HTH_LysR"/>
</dbReference>
<dbReference type="InterPro" id="IPR036388">
    <property type="entry name" value="WH-like_DNA-bd_sf"/>
</dbReference>
<dbReference type="InterPro" id="IPR036390">
    <property type="entry name" value="WH_DNA-bd_sf"/>
</dbReference>
<dbReference type="PANTHER" id="PTHR30537:SF70">
    <property type="entry name" value="HTH-TYPE TRANSCRIPTIONAL ACTIVATOR AMPR"/>
    <property type="match status" value="1"/>
</dbReference>
<dbReference type="PANTHER" id="PTHR30537">
    <property type="entry name" value="HTH-TYPE TRANSCRIPTIONAL REGULATOR"/>
    <property type="match status" value="1"/>
</dbReference>
<dbReference type="Pfam" id="PF00126">
    <property type="entry name" value="HTH_1"/>
    <property type="match status" value="1"/>
</dbReference>
<dbReference type="Pfam" id="PF03466">
    <property type="entry name" value="LysR_substrate"/>
    <property type="match status" value="1"/>
</dbReference>
<dbReference type="PRINTS" id="PR00039">
    <property type="entry name" value="HTHLYSR"/>
</dbReference>
<dbReference type="SUPFAM" id="SSF53850">
    <property type="entry name" value="Periplasmic binding protein-like II"/>
    <property type="match status" value="1"/>
</dbReference>
<dbReference type="SUPFAM" id="SSF46785">
    <property type="entry name" value="Winged helix' DNA-binding domain"/>
    <property type="match status" value="1"/>
</dbReference>
<dbReference type="PROSITE" id="PS50931">
    <property type="entry name" value="HTH_LYSR"/>
    <property type="match status" value="1"/>
</dbReference>
<sequence length="291" mass="32523">MTRSYIPLNSLRAFEAAARHLSFTRAAIELNVTHSAISQHVKSLEQQLNCQLFVRGSRGLMLTTEGESLLPVLNDSFDRMAGMLDRFATKQTQEKLKIGVVGTFAIGCLFPLLSDFKRSYPHIDLHISTHNNRVDPAAEGLDYTIRYGGGAWHDTDAQYLCSALMSPLCSPTLASQIQTPADILKFPLLRSYRRDEWALWMQAAGEAPPSPTHNVMVFDSSVTMLEAAQGGMGVAIAPVRMFTHLLSSERIVQPFLTQIDLGSYWITRLQSRPETPAMREFSRWLTGVLHK</sequence>
<feature type="initiator methionine" description="Removed" evidence="2">
    <location>
        <position position="1"/>
    </location>
</feature>
<feature type="chain" id="PRO_0000105586" description="HTH-type transcriptional activator AmpR">
    <location>
        <begin position="2"/>
        <end position="291"/>
    </location>
</feature>
<feature type="domain" description="HTH lysR-type" evidence="1">
    <location>
        <begin position="6"/>
        <end position="63"/>
    </location>
</feature>
<feature type="DNA-binding region" description="H-T-H motif" evidence="1">
    <location>
        <begin position="23"/>
        <end position="42"/>
    </location>
</feature>
<feature type="strand" evidence="4">
    <location>
        <begin position="94"/>
        <end position="101"/>
    </location>
</feature>
<feature type="helix" evidence="4">
    <location>
        <begin position="102"/>
        <end position="107"/>
    </location>
</feature>
<feature type="helix" evidence="4">
    <location>
        <begin position="109"/>
        <end position="119"/>
    </location>
</feature>
<feature type="strand" evidence="4">
    <location>
        <begin position="123"/>
        <end position="130"/>
    </location>
</feature>
<feature type="helix" evidence="4">
    <location>
        <begin position="136"/>
        <end position="139"/>
    </location>
</feature>
<feature type="strand" evidence="4">
    <location>
        <begin position="142"/>
        <end position="148"/>
    </location>
</feature>
<feature type="strand" evidence="4">
    <location>
        <begin position="155"/>
        <end position="162"/>
    </location>
</feature>
<feature type="strand" evidence="4">
    <location>
        <begin position="165"/>
        <end position="169"/>
    </location>
</feature>
<feature type="helix" evidence="4">
    <location>
        <begin position="171"/>
        <end position="174"/>
    </location>
</feature>
<feature type="helix" evidence="4">
    <location>
        <begin position="180"/>
        <end position="185"/>
    </location>
</feature>
<feature type="strand" evidence="4">
    <location>
        <begin position="188"/>
        <end position="192"/>
    </location>
</feature>
<feature type="helix" evidence="4">
    <location>
        <begin position="196"/>
        <end position="203"/>
    </location>
</feature>
<feature type="strand" evidence="4">
    <location>
        <begin position="215"/>
        <end position="219"/>
    </location>
</feature>
<feature type="helix" evidence="4">
    <location>
        <begin position="221"/>
        <end position="229"/>
    </location>
</feature>
<feature type="strand" evidence="4">
    <location>
        <begin position="234"/>
        <end position="238"/>
    </location>
</feature>
<feature type="helix" evidence="4">
    <location>
        <begin position="239"/>
        <end position="241"/>
    </location>
</feature>
<feature type="helix" evidence="4">
    <location>
        <begin position="243"/>
        <end position="247"/>
    </location>
</feature>
<feature type="strand" evidence="4">
    <location>
        <begin position="250"/>
        <end position="252"/>
    </location>
</feature>
<feature type="strand" evidence="4">
    <location>
        <begin position="263"/>
        <end position="269"/>
    </location>
</feature>
<feature type="helix" evidence="4">
    <location>
        <begin position="276"/>
        <end position="291"/>
    </location>
</feature>
<reference key="1">
    <citation type="journal article" date="1989" name="J. Bacteriol.">
        <title>Binding of the Citrobacter freundii AmpR regulator to a single DNA site provides both autoregulation and activation of the inducible ampC beta-lactamase gene.</title>
        <authorList>
            <person name="Lindquist S."/>
            <person name="Lindberg F."/>
            <person name="Normark S."/>
        </authorList>
    </citation>
    <scope>NUCLEOTIDE SEQUENCE [GENOMIC DNA]</scope>
</reference>
<reference key="2">
    <citation type="journal article" date="1991" name="Mol. Microbiol.">
        <title>Purification and mutant analysis of Citrobacter freundii AmpR, the regulator for chromosomal AmpC beta-lactamase.</title>
        <authorList>
            <person name="Bartowsky E."/>
            <person name="Normark S."/>
        </authorList>
    </citation>
    <scope>PROTEIN SEQUENCE OF 2-16</scope>
    <scope>DNA-BINDING</scope>
</reference>
<accession>P12529</accession>
<organism>
    <name type="scientific">Citrobacter freundii</name>
    <dbReference type="NCBI Taxonomy" id="546"/>
    <lineage>
        <taxon>Bacteria</taxon>
        <taxon>Pseudomonadati</taxon>
        <taxon>Pseudomonadota</taxon>
        <taxon>Gammaproteobacteria</taxon>
        <taxon>Enterobacterales</taxon>
        <taxon>Enterobacteriaceae</taxon>
        <taxon>Citrobacter</taxon>
        <taxon>Citrobacter freundii complex</taxon>
    </lineage>
</organism>
<keyword id="KW-0002">3D-structure</keyword>
<keyword id="KW-0010">Activator</keyword>
<keyword id="KW-0963">Cytoplasm</keyword>
<keyword id="KW-0903">Direct protein sequencing</keyword>
<keyword id="KW-0238">DNA-binding</keyword>
<keyword id="KW-0804">Transcription</keyword>
<keyword id="KW-0805">Transcription regulation</keyword>
<protein>
    <recommendedName>
        <fullName>HTH-type transcriptional activator AmpR</fullName>
    </recommendedName>
</protein>
<proteinExistence type="evidence at protein level"/>
<name>AMPR_CITFR</name>
<comment type="function">
    <text>Regulates the expression of the beta-lactamase gene. Represses cephalosporinase (AmpC) in the presence of beta-lactams and induces it in the absence of them.</text>
</comment>
<comment type="subcellular location">
    <subcellularLocation>
        <location>Cytoplasm</location>
    </subcellularLocation>
</comment>
<comment type="similarity">
    <text evidence="3">Belongs to the LysR transcriptional regulatory family.</text>
</comment>